<reference key="1">
    <citation type="submission" date="2006-08" db="EMBL/GenBank/DDBJ databases">
        <title>Complete sequence of Shewanella frigidimarina NCIMB 400.</title>
        <authorList>
            <consortium name="US DOE Joint Genome Institute"/>
            <person name="Copeland A."/>
            <person name="Lucas S."/>
            <person name="Lapidus A."/>
            <person name="Barry K."/>
            <person name="Detter J.C."/>
            <person name="Glavina del Rio T."/>
            <person name="Hammon N."/>
            <person name="Israni S."/>
            <person name="Dalin E."/>
            <person name="Tice H."/>
            <person name="Pitluck S."/>
            <person name="Fredrickson J.K."/>
            <person name="Kolker E."/>
            <person name="McCuel L.A."/>
            <person name="DiChristina T."/>
            <person name="Nealson K.H."/>
            <person name="Newman D."/>
            <person name="Tiedje J.M."/>
            <person name="Zhou J."/>
            <person name="Romine M.F."/>
            <person name="Culley D.E."/>
            <person name="Serres M."/>
            <person name="Chertkov O."/>
            <person name="Brettin T."/>
            <person name="Bruce D."/>
            <person name="Han C."/>
            <person name="Tapia R."/>
            <person name="Gilna P."/>
            <person name="Schmutz J."/>
            <person name="Larimer F."/>
            <person name="Land M."/>
            <person name="Hauser L."/>
            <person name="Kyrpides N."/>
            <person name="Mikhailova N."/>
            <person name="Richardson P."/>
        </authorList>
    </citation>
    <scope>NUCLEOTIDE SEQUENCE [LARGE SCALE GENOMIC DNA]</scope>
    <source>
        <strain>NCIMB 400</strain>
    </source>
</reference>
<gene>
    <name evidence="1" type="primary">maeA</name>
    <name type="ordered locus">Sfri_0833</name>
</gene>
<keyword id="KW-0479">Metal-binding</keyword>
<keyword id="KW-0520">NAD</keyword>
<keyword id="KW-0560">Oxidoreductase</keyword>
<keyword id="KW-1185">Reference proteome</keyword>
<sequence length="562" mass="62258">MDDNKRPLYLPFAGPAILESPLLNKGSAFSEEERIYFNLEGLIPWVIETIDEQAARAYAQFKNFTNDLDKHIYLRNIQDTNETLFYRLVRNNISEMMPIIYTPTVGLACERFSKNYRRNRGLFISYPNKDRIDDILNNSTRHKVKVIVVTDGERILGLGDQGIGGMGIPIGKLSLYTSCGGISPAYCLAVTLDVGTDNPQLLEDPMYMGWRHQRIGGDEYAEFVEEFMQAVSRRWPDALIQFEDFAQKNAMPLLERYKDQYCSFNDDIQGTAAVTVGSLLAACKAANSKLSEQRITFLGAGSAGCGIAEAIVATMVSEGISDQQARSQVFMVDRWGLLLDNMPNLLPFQQKLAQPCATIEAWDNYSDNISLLDVVNNAKPTVLIGVSGSPGLFTEEIIKAMHSHCKRPIVFPLSNPTSRVEATPKDILNWTSGQALVATGSPFEPVIVNGETFEIAQCNNSFIFPGIGLGVLSCGARRVSDEMLMASSRALAECSPLGKDGVGSLLPRLEDIQTVSKYIAFAVAKAAIDQGLALPCTDELLQQSIEANFWEPEYRRYKRTSF</sequence>
<comment type="catalytic activity">
    <reaction evidence="1">
        <text>(S)-malate + NAD(+) = pyruvate + CO2 + NADH</text>
        <dbReference type="Rhea" id="RHEA:12653"/>
        <dbReference type="ChEBI" id="CHEBI:15361"/>
        <dbReference type="ChEBI" id="CHEBI:15589"/>
        <dbReference type="ChEBI" id="CHEBI:16526"/>
        <dbReference type="ChEBI" id="CHEBI:57540"/>
        <dbReference type="ChEBI" id="CHEBI:57945"/>
        <dbReference type="EC" id="1.1.1.38"/>
    </reaction>
</comment>
<comment type="catalytic activity">
    <reaction evidence="1">
        <text>oxaloacetate + H(+) = pyruvate + CO2</text>
        <dbReference type="Rhea" id="RHEA:15641"/>
        <dbReference type="ChEBI" id="CHEBI:15361"/>
        <dbReference type="ChEBI" id="CHEBI:15378"/>
        <dbReference type="ChEBI" id="CHEBI:16452"/>
        <dbReference type="ChEBI" id="CHEBI:16526"/>
        <dbReference type="EC" id="1.1.1.38"/>
    </reaction>
</comment>
<comment type="cofactor">
    <cofactor evidence="1">
        <name>Mg(2+)</name>
        <dbReference type="ChEBI" id="CHEBI:18420"/>
    </cofactor>
    <cofactor evidence="1">
        <name>Mn(2+)</name>
        <dbReference type="ChEBI" id="CHEBI:29035"/>
    </cofactor>
    <text evidence="1">Divalent metal cations. Prefers magnesium or manganese.</text>
</comment>
<comment type="subunit">
    <text evidence="1">Homotetramer.</text>
</comment>
<comment type="similarity">
    <text evidence="1">Belongs to the malic enzymes family.</text>
</comment>
<protein>
    <recommendedName>
        <fullName evidence="1">NAD-dependent malic enzyme</fullName>
        <shortName evidence="1">NAD-ME</shortName>
        <ecNumber evidence="1">1.1.1.38</ecNumber>
    </recommendedName>
</protein>
<evidence type="ECO:0000255" key="1">
    <source>
        <dbReference type="HAMAP-Rule" id="MF_01619"/>
    </source>
</evidence>
<name>MAO1_SHEFN</name>
<dbReference type="EC" id="1.1.1.38" evidence="1"/>
<dbReference type="EMBL" id="CP000447">
    <property type="protein sequence ID" value="ABI70686.1"/>
    <property type="molecule type" value="Genomic_DNA"/>
</dbReference>
<dbReference type="RefSeq" id="WP_011636309.1">
    <property type="nucleotide sequence ID" value="NC_008345.1"/>
</dbReference>
<dbReference type="SMR" id="Q086X9"/>
<dbReference type="STRING" id="318167.Sfri_0833"/>
<dbReference type="KEGG" id="sfr:Sfri_0833"/>
<dbReference type="eggNOG" id="COG0281">
    <property type="taxonomic scope" value="Bacteria"/>
</dbReference>
<dbReference type="HOGENOM" id="CLU_011405_5_2_6"/>
<dbReference type="OrthoDB" id="3314528at2"/>
<dbReference type="Proteomes" id="UP000000684">
    <property type="component" value="Chromosome"/>
</dbReference>
<dbReference type="GO" id="GO:0005829">
    <property type="term" value="C:cytosol"/>
    <property type="evidence" value="ECO:0007669"/>
    <property type="project" value="TreeGrafter"/>
</dbReference>
<dbReference type="GO" id="GO:0004471">
    <property type="term" value="F:malate dehydrogenase (decarboxylating) (NAD+) activity"/>
    <property type="evidence" value="ECO:0007669"/>
    <property type="project" value="UniProtKB-UniRule"/>
</dbReference>
<dbReference type="GO" id="GO:0046872">
    <property type="term" value="F:metal ion binding"/>
    <property type="evidence" value="ECO:0007669"/>
    <property type="project" value="UniProtKB-KW"/>
</dbReference>
<dbReference type="GO" id="GO:0051287">
    <property type="term" value="F:NAD binding"/>
    <property type="evidence" value="ECO:0007669"/>
    <property type="project" value="InterPro"/>
</dbReference>
<dbReference type="GO" id="GO:0008948">
    <property type="term" value="F:oxaloacetate decarboxylase activity"/>
    <property type="evidence" value="ECO:0007669"/>
    <property type="project" value="UniProtKB-UniRule"/>
</dbReference>
<dbReference type="GO" id="GO:0006108">
    <property type="term" value="P:malate metabolic process"/>
    <property type="evidence" value="ECO:0007669"/>
    <property type="project" value="TreeGrafter"/>
</dbReference>
<dbReference type="CDD" id="cd05312">
    <property type="entry name" value="NAD_bind_1_malic_enz"/>
    <property type="match status" value="1"/>
</dbReference>
<dbReference type="FunFam" id="3.40.50.10380:FF:000001">
    <property type="entry name" value="NAD-dependent malic enzyme"/>
    <property type="match status" value="1"/>
</dbReference>
<dbReference type="FunFam" id="3.40.50.720:FF:000055">
    <property type="entry name" value="NAD-dependent malic enzyme"/>
    <property type="match status" value="1"/>
</dbReference>
<dbReference type="Gene3D" id="3.40.50.10380">
    <property type="entry name" value="Malic enzyme, N-terminal domain"/>
    <property type="match status" value="1"/>
</dbReference>
<dbReference type="Gene3D" id="3.40.50.720">
    <property type="entry name" value="NAD(P)-binding Rossmann-like Domain"/>
    <property type="match status" value="1"/>
</dbReference>
<dbReference type="HAMAP" id="MF_01619">
    <property type="entry name" value="NAD_malic_enz"/>
    <property type="match status" value="1"/>
</dbReference>
<dbReference type="InterPro" id="IPR046346">
    <property type="entry name" value="Aminoacid_DH-like_N_sf"/>
</dbReference>
<dbReference type="InterPro" id="IPR015884">
    <property type="entry name" value="Malic_enzyme_CS"/>
</dbReference>
<dbReference type="InterPro" id="IPR012301">
    <property type="entry name" value="Malic_N_dom"/>
</dbReference>
<dbReference type="InterPro" id="IPR037062">
    <property type="entry name" value="Malic_N_dom_sf"/>
</dbReference>
<dbReference type="InterPro" id="IPR012302">
    <property type="entry name" value="Malic_NAD-bd"/>
</dbReference>
<dbReference type="InterPro" id="IPR001891">
    <property type="entry name" value="Malic_OxRdtase"/>
</dbReference>
<dbReference type="InterPro" id="IPR036291">
    <property type="entry name" value="NAD(P)-bd_dom_sf"/>
</dbReference>
<dbReference type="InterPro" id="IPR023667">
    <property type="entry name" value="NAD_malic_enz_proteobac"/>
</dbReference>
<dbReference type="NCBIfam" id="NF010052">
    <property type="entry name" value="PRK13529.1"/>
    <property type="match status" value="1"/>
</dbReference>
<dbReference type="PANTHER" id="PTHR23406">
    <property type="entry name" value="MALIC ENZYME-RELATED"/>
    <property type="match status" value="1"/>
</dbReference>
<dbReference type="PANTHER" id="PTHR23406:SF34">
    <property type="entry name" value="NAD-DEPENDENT MALIC ENZYME, MITOCHONDRIAL"/>
    <property type="match status" value="1"/>
</dbReference>
<dbReference type="Pfam" id="PF00390">
    <property type="entry name" value="malic"/>
    <property type="match status" value="1"/>
</dbReference>
<dbReference type="Pfam" id="PF03949">
    <property type="entry name" value="Malic_M"/>
    <property type="match status" value="1"/>
</dbReference>
<dbReference type="PIRSF" id="PIRSF000106">
    <property type="entry name" value="ME"/>
    <property type="match status" value="1"/>
</dbReference>
<dbReference type="PRINTS" id="PR00072">
    <property type="entry name" value="MALOXRDTASE"/>
</dbReference>
<dbReference type="SMART" id="SM01274">
    <property type="entry name" value="malic"/>
    <property type="match status" value="1"/>
</dbReference>
<dbReference type="SMART" id="SM00919">
    <property type="entry name" value="Malic_M"/>
    <property type="match status" value="1"/>
</dbReference>
<dbReference type="SUPFAM" id="SSF53223">
    <property type="entry name" value="Aminoacid dehydrogenase-like, N-terminal domain"/>
    <property type="match status" value="1"/>
</dbReference>
<dbReference type="SUPFAM" id="SSF51735">
    <property type="entry name" value="NAD(P)-binding Rossmann-fold domains"/>
    <property type="match status" value="1"/>
</dbReference>
<dbReference type="PROSITE" id="PS00331">
    <property type="entry name" value="MALIC_ENZYMES"/>
    <property type="match status" value="1"/>
</dbReference>
<feature type="chain" id="PRO_1000069542" description="NAD-dependent malic enzyme">
    <location>
        <begin position="1"/>
        <end position="562"/>
    </location>
</feature>
<feature type="active site" description="Proton donor" evidence="1">
    <location>
        <position position="101"/>
    </location>
</feature>
<feature type="active site" description="Proton acceptor" evidence="1">
    <location>
        <position position="172"/>
    </location>
</feature>
<feature type="binding site" evidence="1">
    <location>
        <position position="154"/>
    </location>
    <ligand>
        <name>NAD(+)</name>
        <dbReference type="ChEBI" id="CHEBI:57540"/>
    </ligand>
</feature>
<feature type="binding site" evidence="1">
    <location>
        <position position="243"/>
    </location>
    <ligand>
        <name>a divalent metal cation</name>
        <dbReference type="ChEBI" id="CHEBI:60240"/>
    </ligand>
</feature>
<feature type="binding site" evidence="1">
    <location>
        <position position="244"/>
    </location>
    <ligand>
        <name>a divalent metal cation</name>
        <dbReference type="ChEBI" id="CHEBI:60240"/>
    </ligand>
</feature>
<feature type="binding site" evidence="1">
    <location>
        <position position="267"/>
    </location>
    <ligand>
        <name>a divalent metal cation</name>
        <dbReference type="ChEBI" id="CHEBI:60240"/>
    </ligand>
</feature>
<feature type="binding site" evidence="1">
    <location>
        <position position="267"/>
    </location>
    <ligand>
        <name>NAD(+)</name>
        <dbReference type="ChEBI" id="CHEBI:57540"/>
    </ligand>
</feature>
<feature type="binding site" evidence="1">
    <location>
        <position position="415"/>
    </location>
    <ligand>
        <name>NAD(+)</name>
        <dbReference type="ChEBI" id="CHEBI:57540"/>
    </ligand>
</feature>
<feature type="site" description="Important for activity" evidence="1">
    <location>
        <position position="267"/>
    </location>
</feature>
<proteinExistence type="inferred from homology"/>
<organism>
    <name type="scientific">Shewanella frigidimarina (strain NCIMB 400)</name>
    <dbReference type="NCBI Taxonomy" id="318167"/>
    <lineage>
        <taxon>Bacteria</taxon>
        <taxon>Pseudomonadati</taxon>
        <taxon>Pseudomonadota</taxon>
        <taxon>Gammaproteobacteria</taxon>
        <taxon>Alteromonadales</taxon>
        <taxon>Shewanellaceae</taxon>
        <taxon>Shewanella</taxon>
    </lineage>
</organism>
<accession>Q086X9</accession>